<organism>
    <name type="scientific">Homo sapiens</name>
    <name type="common">Human</name>
    <dbReference type="NCBI Taxonomy" id="9606"/>
    <lineage>
        <taxon>Eukaryota</taxon>
        <taxon>Metazoa</taxon>
        <taxon>Chordata</taxon>
        <taxon>Craniata</taxon>
        <taxon>Vertebrata</taxon>
        <taxon>Euteleostomi</taxon>
        <taxon>Mammalia</taxon>
        <taxon>Eutheria</taxon>
        <taxon>Euarchontoglires</taxon>
        <taxon>Primates</taxon>
        <taxon>Haplorrhini</taxon>
        <taxon>Catarrhini</taxon>
        <taxon>Hominidae</taxon>
        <taxon>Homo</taxon>
    </lineage>
</organism>
<proteinExistence type="evidence at protein level"/>
<name>GPR78_HUMAN</name>
<comment type="function">
    <text evidence="4">Orphan receptor. Displays a significant level of constitutive activity. Its effect is mediated by G(s)-alpha protein that stimulate adenylate cyclase, resulting in an elevation of intracellular cAMP.</text>
</comment>
<comment type="subcellular location">
    <subcellularLocation>
        <location>Cell membrane</location>
        <topology>Multi-pass membrane protein</topology>
    </subcellularLocation>
</comment>
<comment type="tissue specificity">
    <text evidence="4">High level of expression in placenta. Expressed throughout the brain at low level. No expression detected in skeletal muscle, lung, heart, liver, pancreas, or kidney.</text>
</comment>
<comment type="similarity">
    <text evidence="2">Belongs to the G-protein coupled receptor 1 family.</text>
</comment>
<accession>Q96P69</accession>
<accession>Q8NGV3</accession>
<protein>
    <recommendedName>
        <fullName>G-protein coupled receptor 78</fullName>
    </recommendedName>
</protein>
<reference key="1">
    <citation type="journal article" date="2001" name="Gene">
        <title>Discovery and mapping of ten novel G protein-coupled receptor genes.</title>
        <authorList>
            <person name="Lee D.K."/>
            <person name="Nguyen T."/>
            <person name="Lynch K.R."/>
            <person name="Cheng R."/>
            <person name="Vanti W.B."/>
            <person name="Arkhitko O."/>
            <person name="Lewis T."/>
            <person name="Evans J.F."/>
            <person name="George S.R."/>
            <person name="O'Dowd B.F."/>
        </authorList>
    </citation>
    <scope>NUCLEOTIDE SEQUENCE [MRNA]</scope>
</reference>
<reference key="2">
    <citation type="submission" date="2001-07" db="EMBL/GenBank/DDBJ databases">
        <title>Genome-wide discovery and analysis of human seven transmembrane helix receptor genes.</title>
        <authorList>
            <person name="Suwa M."/>
            <person name="Sato T."/>
            <person name="Okouchi I."/>
            <person name="Arita M."/>
            <person name="Futami K."/>
            <person name="Matsumoto S."/>
            <person name="Tsutsumi S."/>
            <person name="Aburatani H."/>
            <person name="Asai K."/>
            <person name="Akiyama Y."/>
        </authorList>
    </citation>
    <scope>NUCLEOTIDE SEQUENCE [GENOMIC DNA]</scope>
</reference>
<reference key="3">
    <citation type="journal article" date="2003" name="Genome Res.">
        <title>The secreted protein discovery initiative (SPDI), a large-scale effort to identify novel human secreted and transmembrane proteins: a bioinformatics assessment.</title>
        <authorList>
            <person name="Clark H.F."/>
            <person name="Gurney A.L."/>
            <person name="Abaya E."/>
            <person name="Baker K."/>
            <person name="Baldwin D.T."/>
            <person name="Brush J."/>
            <person name="Chen J."/>
            <person name="Chow B."/>
            <person name="Chui C."/>
            <person name="Crowley C."/>
            <person name="Currell B."/>
            <person name="Deuel B."/>
            <person name="Dowd P."/>
            <person name="Eaton D."/>
            <person name="Foster J.S."/>
            <person name="Grimaldi C."/>
            <person name="Gu Q."/>
            <person name="Hass P.E."/>
            <person name="Heldens S."/>
            <person name="Huang A."/>
            <person name="Kim H.S."/>
            <person name="Klimowski L."/>
            <person name="Jin Y."/>
            <person name="Johnson S."/>
            <person name="Lee J."/>
            <person name="Lewis L."/>
            <person name="Liao D."/>
            <person name="Mark M.R."/>
            <person name="Robbie E."/>
            <person name="Sanchez C."/>
            <person name="Schoenfeld J."/>
            <person name="Seshagiri S."/>
            <person name="Simmons L."/>
            <person name="Singh J."/>
            <person name="Smith V."/>
            <person name="Stinson J."/>
            <person name="Vagts A."/>
            <person name="Vandlen R.L."/>
            <person name="Watanabe C."/>
            <person name="Wieand D."/>
            <person name="Woods K."/>
            <person name="Xie M.-H."/>
            <person name="Yansura D.G."/>
            <person name="Yi S."/>
            <person name="Yu G."/>
            <person name="Yuan J."/>
            <person name="Zhang M."/>
            <person name="Zhang Z."/>
            <person name="Goddard A.D."/>
            <person name="Wood W.I."/>
            <person name="Godowski P.J."/>
            <person name="Gray A.M."/>
        </authorList>
    </citation>
    <scope>NUCLEOTIDE SEQUENCE [LARGE SCALE MRNA]</scope>
</reference>
<reference key="4">
    <citation type="journal article" date="2004" name="Genome Res.">
        <title>The status, quality, and expansion of the NIH full-length cDNA project: the Mammalian Gene Collection (MGC).</title>
        <authorList>
            <consortium name="The MGC Project Team"/>
        </authorList>
    </citation>
    <scope>NUCLEOTIDE SEQUENCE [LARGE SCALE MRNA]</scope>
</reference>
<reference key="5">
    <citation type="journal article" date="2007" name="Biochim. Biophys. Acta">
        <title>Tissue distribution and functional analyses of the constitutively active orphan G protein coupled receptors, GPR26 and GPR78.</title>
        <authorList>
            <person name="Jones P.G."/>
            <person name="Nawoschik S.P."/>
            <person name="Sreekumar K."/>
            <person name="Uveges A.J."/>
            <person name="Tseng E."/>
            <person name="Zhang L."/>
            <person name="Johnson J."/>
            <person name="He L."/>
            <person name="Paulsen J.E."/>
            <person name="Bates B."/>
            <person name="Pausch M.H."/>
        </authorList>
    </citation>
    <scope>FUNCTION</scope>
    <scope>TISSUE SPECIFICITY</scope>
    <scope>MUTAGENESIS OF ARG-236</scope>
</reference>
<sequence length="363" mass="39332">MGPGEALLAGLLVMVLAVALLSNALVLLCCAYSAELRTRASGVLLVNLSLGHLLLAALDMPFTLLGVMRGRTPSAPGACQVIGFLDTFLASNAALSVAALSADQWLAVGFPLRYAGRLRPRYAGLLLGCAWGQSLAFSGAALGCSWLGYSSAFASCSLRLPPEPERPRFAAFTATLHAVGFVLPLAVLCLTSLQVHRVARRHCQRMDTVTMKALALLADLHPSVRQRCLIQQKRRRHRATRKIGIAIATFLICFAPYVMTRLAELVPFVTVNAQWGILSKCLTYSKAVADPFTYSLLRRPFRQVLAGMVHRLLKRTPRPASTHDSSLDVAGMVHQLLKRTPRPASTHNGSVDTENDSCLQQTH</sequence>
<dbReference type="EMBL" id="AF411107">
    <property type="protein sequence ID" value="AAL26479.1"/>
    <property type="molecule type" value="mRNA"/>
</dbReference>
<dbReference type="EMBL" id="AB065673">
    <property type="protein sequence ID" value="BAC05898.1"/>
    <property type="molecule type" value="Genomic_DNA"/>
</dbReference>
<dbReference type="EMBL" id="AY359107">
    <property type="protein sequence ID" value="AAQ89465.1"/>
    <property type="molecule type" value="mRNA"/>
</dbReference>
<dbReference type="EMBL" id="BC057778">
    <property type="protein sequence ID" value="AAH57778.1"/>
    <property type="molecule type" value="mRNA"/>
</dbReference>
<dbReference type="EMBL" id="BC069343">
    <property type="protein sequence ID" value="AAH69343.1"/>
    <property type="molecule type" value="mRNA"/>
</dbReference>
<dbReference type="EMBL" id="BC069813">
    <property type="protein sequence ID" value="AAH69813.1"/>
    <property type="molecule type" value="mRNA"/>
</dbReference>
<dbReference type="CCDS" id="CCDS3403.1"/>
<dbReference type="RefSeq" id="NP_543009.2">
    <property type="nucleotide sequence ID" value="NM_080819.4"/>
</dbReference>
<dbReference type="SMR" id="Q96P69"/>
<dbReference type="BioGRID" id="118076">
    <property type="interactions" value="1"/>
</dbReference>
<dbReference type="STRING" id="9606.ENSP00000371927"/>
<dbReference type="ChEMBL" id="CHEMBL4523908"/>
<dbReference type="GlyGen" id="Q96P69">
    <property type="glycosylation" value="2 sites, 1 O-linked glycan (2 sites)"/>
</dbReference>
<dbReference type="iPTMnet" id="Q96P69"/>
<dbReference type="PhosphoSitePlus" id="Q96P69"/>
<dbReference type="BioMuta" id="GPR78"/>
<dbReference type="jPOST" id="Q96P69"/>
<dbReference type="MassIVE" id="Q96P69"/>
<dbReference type="PaxDb" id="9606-ENSP00000371927"/>
<dbReference type="Antibodypedia" id="9632">
    <property type="antibodies" value="198 antibodies from 30 providers"/>
</dbReference>
<dbReference type="DNASU" id="27201"/>
<dbReference type="Ensembl" id="ENST00000382487.5">
    <property type="protein sequence ID" value="ENSP00000371927.4"/>
    <property type="gene ID" value="ENSG00000155269.12"/>
</dbReference>
<dbReference type="GeneID" id="27201"/>
<dbReference type="KEGG" id="hsa:27201"/>
<dbReference type="MANE-Select" id="ENST00000382487.5">
    <property type="protein sequence ID" value="ENSP00000371927.4"/>
    <property type="RefSeq nucleotide sequence ID" value="NM_080819.5"/>
    <property type="RefSeq protein sequence ID" value="NP_543009.2"/>
</dbReference>
<dbReference type="UCSC" id="uc003glk.5">
    <property type="organism name" value="human"/>
</dbReference>
<dbReference type="AGR" id="HGNC:4528"/>
<dbReference type="CTD" id="27201"/>
<dbReference type="DisGeNET" id="27201"/>
<dbReference type="GeneCards" id="GPR78"/>
<dbReference type="HGNC" id="HGNC:4528">
    <property type="gene designation" value="GPR78"/>
</dbReference>
<dbReference type="HPA" id="ENSG00000155269">
    <property type="expression patterns" value="Group enriched (esophagus, placenta)"/>
</dbReference>
<dbReference type="MalaCards" id="GPR78"/>
<dbReference type="MIM" id="606921">
    <property type="type" value="gene"/>
</dbReference>
<dbReference type="neXtProt" id="NX_Q96P69"/>
<dbReference type="OpenTargets" id="ENSG00000155269"/>
<dbReference type="PharmGKB" id="PA28921"/>
<dbReference type="VEuPathDB" id="HostDB:ENSG00000155269"/>
<dbReference type="eggNOG" id="KOG3656">
    <property type="taxonomic scope" value="Eukaryota"/>
</dbReference>
<dbReference type="GeneTree" id="ENSGT00950000183001"/>
<dbReference type="InParanoid" id="Q96P69"/>
<dbReference type="OMA" id="HCRRMDT"/>
<dbReference type="OrthoDB" id="6159456at2759"/>
<dbReference type="PAN-GO" id="Q96P69">
    <property type="GO annotations" value="2 GO annotations based on evolutionary models"/>
</dbReference>
<dbReference type="PhylomeDB" id="Q96P69"/>
<dbReference type="TreeFam" id="TF332434"/>
<dbReference type="PathwayCommons" id="Q96P69"/>
<dbReference type="BioGRID-ORCS" id="27201">
    <property type="hits" value="11 hits in 1139 CRISPR screens"/>
</dbReference>
<dbReference type="ChiTaRS" id="GPR78">
    <property type="organism name" value="human"/>
</dbReference>
<dbReference type="GeneWiki" id="GPR78"/>
<dbReference type="GenomeRNAi" id="27201"/>
<dbReference type="Pharos" id="Q96P69">
    <property type="development level" value="Tbio"/>
</dbReference>
<dbReference type="PRO" id="PR:Q96P69"/>
<dbReference type="Proteomes" id="UP000005640">
    <property type="component" value="Chromosome 4"/>
</dbReference>
<dbReference type="RNAct" id="Q96P69">
    <property type="molecule type" value="protein"/>
</dbReference>
<dbReference type="Bgee" id="ENSG00000155269">
    <property type="expression patterns" value="Expressed in lower esophagus mucosa and 59 other cell types or tissues"/>
</dbReference>
<dbReference type="ExpressionAtlas" id="Q96P69">
    <property type="expression patterns" value="baseline and differential"/>
</dbReference>
<dbReference type="GO" id="GO:0005886">
    <property type="term" value="C:plasma membrane"/>
    <property type="evidence" value="ECO:0007669"/>
    <property type="project" value="UniProtKB-SubCell"/>
</dbReference>
<dbReference type="GO" id="GO:0004930">
    <property type="term" value="F:G protein-coupled receptor activity"/>
    <property type="evidence" value="ECO:0000314"/>
    <property type="project" value="UniProtKB"/>
</dbReference>
<dbReference type="GO" id="GO:0007189">
    <property type="term" value="P:adenylate cyclase-activating G protein-coupled receptor signaling pathway"/>
    <property type="evidence" value="ECO:0000314"/>
    <property type="project" value="UniProtKB"/>
</dbReference>
<dbReference type="CDD" id="cd15219">
    <property type="entry name" value="7tmA_GPR26_GPR78-like"/>
    <property type="match status" value="1"/>
</dbReference>
<dbReference type="FunFam" id="1.20.1070.10:FF:000289">
    <property type="entry name" value="G protein-coupled receptor 78"/>
    <property type="match status" value="1"/>
</dbReference>
<dbReference type="Gene3D" id="1.20.1070.10">
    <property type="entry name" value="Rhodopsin 7-helix transmembrane proteins"/>
    <property type="match status" value="1"/>
</dbReference>
<dbReference type="InterPro" id="IPR051880">
    <property type="entry name" value="GPC_Orphan_Receptors"/>
</dbReference>
<dbReference type="InterPro" id="IPR000276">
    <property type="entry name" value="GPCR_Rhodpsn"/>
</dbReference>
<dbReference type="InterPro" id="IPR017452">
    <property type="entry name" value="GPCR_Rhodpsn_7TM"/>
</dbReference>
<dbReference type="InterPro" id="IPR049579">
    <property type="entry name" value="GPR26/78-like"/>
</dbReference>
<dbReference type="PANTHER" id="PTHR24245">
    <property type="entry name" value="G-PROTEIN COUPLED RECEPTOR"/>
    <property type="match status" value="1"/>
</dbReference>
<dbReference type="PANTHER" id="PTHR24245:SF7">
    <property type="entry name" value="G-PROTEIN COUPLED RECEPTOR 78"/>
    <property type="match status" value="1"/>
</dbReference>
<dbReference type="Pfam" id="PF00001">
    <property type="entry name" value="7tm_1"/>
    <property type="match status" value="1"/>
</dbReference>
<dbReference type="PRINTS" id="PR00237">
    <property type="entry name" value="GPCRRHODOPSN"/>
</dbReference>
<dbReference type="SUPFAM" id="SSF81321">
    <property type="entry name" value="Family A G protein-coupled receptor-like"/>
    <property type="match status" value="1"/>
</dbReference>
<dbReference type="PROSITE" id="PS50262">
    <property type="entry name" value="G_PROTEIN_RECEP_F1_2"/>
    <property type="match status" value="1"/>
</dbReference>
<gene>
    <name type="primary">GPR78</name>
    <name type="ORF">UNQ5925/PRO19818</name>
</gene>
<evidence type="ECO:0000255" key="1"/>
<evidence type="ECO:0000255" key="2">
    <source>
        <dbReference type="PROSITE-ProRule" id="PRU00521"/>
    </source>
</evidence>
<evidence type="ECO:0000256" key="3">
    <source>
        <dbReference type="SAM" id="MobiDB-lite"/>
    </source>
</evidence>
<evidence type="ECO:0000269" key="4">
    <source>
    </source>
</evidence>
<evidence type="ECO:0000305" key="5"/>
<keyword id="KW-1003">Cell membrane</keyword>
<keyword id="KW-1015">Disulfide bond</keyword>
<keyword id="KW-0297">G-protein coupled receptor</keyword>
<keyword id="KW-0472">Membrane</keyword>
<keyword id="KW-0675">Receptor</keyword>
<keyword id="KW-1185">Reference proteome</keyword>
<keyword id="KW-0807">Transducer</keyword>
<keyword id="KW-0812">Transmembrane</keyword>
<keyword id="KW-1133">Transmembrane helix</keyword>
<feature type="chain" id="PRO_0000069585" description="G-protein coupled receptor 78">
    <location>
        <begin position="1"/>
        <end position="363"/>
    </location>
</feature>
<feature type="topological domain" description="Extracellular" evidence="1">
    <location>
        <begin position="1"/>
        <end position="7"/>
    </location>
</feature>
<feature type="transmembrane region" description="Helical; Name=1" evidence="1">
    <location>
        <begin position="8"/>
        <end position="28"/>
    </location>
</feature>
<feature type="topological domain" description="Cytoplasmic" evidence="1">
    <location>
        <begin position="29"/>
        <end position="47"/>
    </location>
</feature>
<feature type="transmembrane region" description="Helical; Name=2" evidence="1">
    <location>
        <begin position="48"/>
        <end position="68"/>
    </location>
</feature>
<feature type="topological domain" description="Extracellular" evidence="1">
    <location>
        <begin position="69"/>
        <end position="80"/>
    </location>
</feature>
<feature type="transmembrane region" description="Helical; Name=3" evidence="1">
    <location>
        <begin position="81"/>
        <end position="101"/>
    </location>
</feature>
<feature type="topological domain" description="Cytoplasmic" evidence="1">
    <location>
        <begin position="102"/>
        <end position="122"/>
    </location>
</feature>
<feature type="transmembrane region" description="Helical; Name=4" evidence="1">
    <location>
        <begin position="123"/>
        <end position="143"/>
    </location>
</feature>
<feature type="topological domain" description="Extracellular" evidence="1">
    <location>
        <begin position="144"/>
        <end position="168"/>
    </location>
</feature>
<feature type="transmembrane region" description="Helical; Name=5" evidence="1">
    <location>
        <begin position="169"/>
        <end position="189"/>
    </location>
</feature>
<feature type="topological domain" description="Cytoplasmic" evidence="1">
    <location>
        <begin position="190"/>
        <end position="242"/>
    </location>
</feature>
<feature type="transmembrane region" description="Helical; Name=6" evidence="1">
    <location>
        <begin position="243"/>
        <end position="263"/>
    </location>
</feature>
<feature type="topological domain" description="Extracellular" evidence="1">
    <location>
        <begin position="264"/>
        <end position="277"/>
    </location>
</feature>
<feature type="transmembrane region" description="Helical; Name=7" evidence="1">
    <location>
        <begin position="278"/>
        <end position="297"/>
    </location>
</feature>
<feature type="topological domain" description="Cytoplasmic" evidence="1">
    <location>
        <begin position="298"/>
        <end position="363"/>
    </location>
</feature>
<feature type="region of interest" description="Disordered" evidence="3">
    <location>
        <begin position="340"/>
        <end position="363"/>
    </location>
</feature>
<feature type="compositionally biased region" description="Polar residues" evidence="3">
    <location>
        <begin position="343"/>
        <end position="363"/>
    </location>
</feature>
<feature type="disulfide bond" evidence="2">
    <location>
        <begin position="79"/>
        <end position="156"/>
    </location>
</feature>
<feature type="sequence variant" id="VAR_024258" description="In dbSNP:rs17844778.">
    <original>R</original>
    <variation>S</variation>
    <location>
        <position position="201"/>
    </location>
</feature>
<feature type="sequence variant" id="VAR_033474" description="In dbSNP:rs11941659.">
    <original>A</original>
    <variation>T</variation>
    <location>
        <position position="330"/>
    </location>
</feature>
<feature type="sequence variant" id="VAR_033475" description="In dbSNP:rs9685931.">
    <original>R</original>
    <variation>H</variation>
    <location>
        <position position="342"/>
    </location>
</feature>
<feature type="mutagenesis site" description="No effect on constitutive activity." evidence="4">
    <original>R</original>
    <variation>E</variation>
    <location>
        <position position="236"/>
    </location>
</feature>
<feature type="sequence conflict" description="In Ref. 1; AAL26479." evidence="5" ref="1">
    <original>L</original>
    <variation>V</variation>
    <location>
        <position position="216"/>
    </location>
</feature>
<feature type="sequence conflict" description="In Ref. 1; AAL26479." evidence="5" ref="1">
    <original>QR</original>
    <variation>HG</variation>
    <location>
        <begin position="226"/>
        <end position="227"/>
    </location>
</feature>